<proteinExistence type="inferred from homology"/>
<keyword id="KW-0067">ATP-binding</keyword>
<keyword id="KW-0173">Coenzyme A biosynthesis</keyword>
<keyword id="KW-0963">Cytoplasm</keyword>
<keyword id="KW-0460">Magnesium</keyword>
<keyword id="KW-0547">Nucleotide-binding</keyword>
<keyword id="KW-0548">Nucleotidyltransferase</keyword>
<keyword id="KW-1185">Reference proteome</keyword>
<keyword id="KW-0808">Transferase</keyword>
<protein>
    <recommendedName>
        <fullName evidence="1">Phosphopantetheine adenylyltransferase</fullName>
        <ecNumber evidence="1">2.7.7.3</ecNumber>
    </recommendedName>
    <alternativeName>
        <fullName evidence="1">Dephospho-CoA pyrophosphorylase</fullName>
    </alternativeName>
    <alternativeName>
        <fullName evidence="1">Pantetheine-phosphate adenylyltransferase</fullName>
        <shortName evidence="1">PPAT</shortName>
    </alternativeName>
</protein>
<organism>
    <name type="scientific">Caulobacter vibrioides (strain NA1000 / CB15N)</name>
    <name type="common">Caulobacter crescentus</name>
    <dbReference type="NCBI Taxonomy" id="565050"/>
    <lineage>
        <taxon>Bacteria</taxon>
        <taxon>Pseudomonadati</taxon>
        <taxon>Pseudomonadota</taxon>
        <taxon>Alphaproteobacteria</taxon>
        <taxon>Caulobacterales</taxon>
        <taxon>Caulobacteraceae</taxon>
        <taxon>Caulobacter</taxon>
    </lineage>
</organism>
<gene>
    <name evidence="1" type="primary">coaD</name>
    <name type="ordered locus">CCNA_01652</name>
</gene>
<comment type="function">
    <text evidence="1">Reversibly transfers an adenylyl group from ATP to 4'-phosphopantetheine, yielding dephospho-CoA (dPCoA) and pyrophosphate.</text>
</comment>
<comment type="catalytic activity">
    <reaction evidence="1">
        <text>(R)-4'-phosphopantetheine + ATP + H(+) = 3'-dephospho-CoA + diphosphate</text>
        <dbReference type="Rhea" id="RHEA:19801"/>
        <dbReference type="ChEBI" id="CHEBI:15378"/>
        <dbReference type="ChEBI" id="CHEBI:30616"/>
        <dbReference type="ChEBI" id="CHEBI:33019"/>
        <dbReference type="ChEBI" id="CHEBI:57328"/>
        <dbReference type="ChEBI" id="CHEBI:61723"/>
        <dbReference type="EC" id="2.7.7.3"/>
    </reaction>
</comment>
<comment type="cofactor">
    <cofactor evidence="1">
        <name>Mg(2+)</name>
        <dbReference type="ChEBI" id="CHEBI:18420"/>
    </cofactor>
</comment>
<comment type="pathway">
    <text evidence="1">Cofactor biosynthesis; coenzyme A biosynthesis; CoA from (R)-pantothenate: step 4/5.</text>
</comment>
<comment type="subunit">
    <text evidence="1">Homohexamer.</text>
</comment>
<comment type="subcellular location">
    <subcellularLocation>
        <location evidence="1">Cytoplasm</location>
    </subcellularLocation>
</comment>
<comment type="similarity">
    <text evidence="1">Belongs to the bacterial CoaD family.</text>
</comment>
<evidence type="ECO:0000255" key="1">
    <source>
        <dbReference type="HAMAP-Rule" id="MF_00151"/>
    </source>
</evidence>
<reference key="1">
    <citation type="journal article" date="2010" name="J. Bacteriol.">
        <title>The genetic basis of laboratory adaptation in Caulobacter crescentus.</title>
        <authorList>
            <person name="Marks M.E."/>
            <person name="Castro-Rojas C.M."/>
            <person name="Teiling C."/>
            <person name="Du L."/>
            <person name="Kapatral V."/>
            <person name="Walunas T.L."/>
            <person name="Crosson S."/>
        </authorList>
    </citation>
    <scope>NUCLEOTIDE SEQUENCE [LARGE SCALE GENOMIC DNA]</scope>
    <source>
        <strain>NA1000 / CB15N</strain>
    </source>
</reference>
<dbReference type="EC" id="2.7.7.3" evidence="1"/>
<dbReference type="EMBL" id="CP001340">
    <property type="protein sequence ID" value="ACL95117.1"/>
    <property type="molecule type" value="Genomic_DNA"/>
</dbReference>
<dbReference type="RefSeq" id="WP_010919455.1">
    <property type="nucleotide sequence ID" value="NC_011916.1"/>
</dbReference>
<dbReference type="RefSeq" id="YP_002517025.1">
    <property type="nucleotide sequence ID" value="NC_011916.1"/>
</dbReference>
<dbReference type="SMR" id="B8GVE7"/>
<dbReference type="GeneID" id="7331711"/>
<dbReference type="KEGG" id="ccs:CCNA_01652"/>
<dbReference type="PATRIC" id="fig|565050.3.peg.1628"/>
<dbReference type="HOGENOM" id="CLU_100149_0_1_5"/>
<dbReference type="OrthoDB" id="9806661at2"/>
<dbReference type="PhylomeDB" id="B8GVE7"/>
<dbReference type="UniPathway" id="UPA00241">
    <property type="reaction ID" value="UER00355"/>
</dbReference>
<dbReference type="Proteomes" id="UP000001364">
    <property type="component" value="Chromosome"/>
</dbReference>
<dbReference type="GO" id="GO:0005737">
    <property type="term" value="C:cytoplasm"/>
    <property type="evidence" value="ECO:0007669"/>
    <property type="project" value="UniProtKB-SubCell"/>
</dbReference>
<dbReference type="GO" id="GO:0005524">
    <property type="term" value="F:ATP binding"/>
    <property type="evidence" value="ECO:0007669"/>
    <property type="project" value="UniProtKB-KW"/>
</dbReference>
<dbReference type="GO" id="GO:0004595">
    <property type="term" value="F:pantetheine-phosphate adenylyltransferase activity"/>
    <property type="evidence" value="ECO:0007669"/>
    <property type="project" value="UniProtKB-UniRule"/>
</dbReference>
<dbReference type="GO" id="GO:0015937">
    <property type="term" value="P:coenzyme A biosynthetic process"/>
    <property type="evidence" value="ECO:0007669"/>
    <property type="project" value="UniProtKB-UniRule"/>
</dbReference>
<dbReference type="CDD" id="cd02163">
    <property type="entry name" value="PPAT"/>
    <property type="match status" value="1"/>
</dbReference>
<dbReference type="Gene3D" id="3.40.50.620">
    <property type="entry name" value="HUPs"/>
    <property type="match status" value="1"/>
</dbReference>
<dbReference type="HAMAP" id="MF_00151">
    <property type="entry name" value="PPAT_bact"/>
    <property type="match status" value="1"/>
</dbReference>
<dbReference type="InterPro" id="IPR004821">
    <property type="entry name" value="Cyt_trans-like"/>
</dbReference>
<dbReference type="InterPro" id="IPR001980">
    <property type="entry name" value="PPAT"/>
</dbReference>
<dbReference type="InterPro" id="IPR014729">
    <property type="entry name" value="Rossmann-like_a/b/a_fold"/>
</dbReference>
<dbReference type="NCBIfam" id="TIGR01510">
    <property type="entry name" value="coaD_prev_kdtB"/>
    <property type="match status" value="1"/>
</dbReference>
<dbReference type="NCBIfam" id="TIGR00125">
    <property type="entry name" value="cyt_tran_rel"/>
    <property type="match status" value="1"/>
</dbReference>
<dbReference type="PANTHER" id="PTHR21342">
    <property type="entry name" value="PHOSPHOPANTETHEINE ADENYLYLTRANSFERASE"/>
    <property type="match status" value="1"/>
</dbReference>
<dbReference type="PANTHER" id="PTHR21342:SF1">
    <property type="entry name" value="PHOSPHOPANTETHEINE ADENYLYLTRANSFERASE"/>
    <property type="match status" value="1"/>
</dbReference>
<dbReference type="Pfam" id="PF01467">
    <property type="entry name" value="CTP_transf_like"/>
    <property type="match status" value="1"/>
</dbReference>
<dbReference type="PRINTS" id="PR01020">
    <property type="entry name" value="LPSBIOSNTHSS"/>
</dbReference>
<dbReference type="SUPFAM" id="SSF52374">
    <property type="entry name" value="Nucleotidylyl transferase"/>
    <property type="match status" value="1"/>
</dbReference>
<name>COAD_CAUVN</name>
<accession>B8GVE7</accession>
<feature type="chain" id="PRO_1000123275" description="Phosphopantetheine adenylyltransferase">
    <location>
        <begin position="1"/>
        <end position="163"/>
    </location>
</feature>
<feature type="binding site" evidence="1">
    <location>
        <begin position="9"/>
        <end position="10"/>
    </location>
    <ligand>
        <name>ATP</name>
        <dbReference type="ChEBI" id="CHEBI:30616"/>
    </ligand>
</feature>
<feature type="binding site" evidence="1">
    <location>
        <position position="9"/>
    </location>
    <ligand>
        <name>substrate</name>
    </ligand>
</feature>
<feature type="binding site" evidence="1">
    <location>
        <position position="17"/>
    </location>
    <ligand>
        <name>ATP</name>
        <dbReference type="ChEBI" id="CHEBI:30616"/>
    </ligand>
</feature>
<feature type="binding site" evidence="1">
    <location>
        <position position="41"/>
    </location>
    <ligand>
        <name>substrate</name>
    </ligand>
</feature>
<feature type="binding site" evidence="1">
    <location>
        <position position="76"/>
    </location>
    <ligand>
        <name>substrate</name>
    </ligand>
</feature>
<feature type="binding site" evidence="1">
    <location>
        <position position="90"/>
    </location>
    <ligand>
        <name>substrate</name>
    </ligand>
</feature>
<feature type="binding site" evidence="1">
    <location>
        <begin position="91"/>
        <end position="93"/>
    </location>
    <ligand>
        <name>ATP</name>
        <dbReference type="ChEBI" id="CHEBI:30616"/>
    </ligand>
</feature>
<feature type="binding site" evidence="1">
    <location>
        <position position="101"/>
    </location>
    <ligand>
        <name>ATP</name>
        <dbReference type="ChEBI" id="CHEBI:30616"/>
    </ligand>
</feature>
<feature type="binding site" evidence="1">
    <location>
        <begin position="126"/>
        <end position="132"/>
    </location>
    <ligand>
        <name>ATP</name>
        <dbReference type="ChEBI" id="CHEBI:30616"/>
    </ligand>
</feature>
<feature type="site" description="Transition state stabilizer" evidence="1">
    <location>
        <position position="17"/>
    </location>
</feature>
<sequence>MRVGLYPGTFDPVTNGHLDIIGRAVKLVDKLVIGVAINIGKGPLFSLEERVEILERETAHLKKIAEIEVRPFDSLLMHFARDVNAQMIVRGLRAVADFEYEFQMTAMNQQLDREIETVFLMADPRHQAIASRLVKEIATLGGDIGKFVPPGVAQQLLAKVGKG</sequence>